<reference key="1">
    <citation type="journal article" date="2008" name="DNA Res.">
        <title>Complete genome sequence and comparative analysis of the wild-type commensal Escherichia coli strain SE11 isolated from a healthy adult.</title>
        <authorList>
            <person name="Oshima K."/>
            <person name="Toh H."/>
            <person name="Ogura Y."/>
            <person name="Sasamoto H."/>
            <person name="Morita H."/>
            <person name="Park S.-H."/>
            <person name="Ooka T."/>
            <person name="Iyoda S."/>
            <person name="Taylor T.D."/>
            <person name="Hayashi T."/>
            <person name="Itoh K."/>
            <person name="Hattori M."/>
        </authorList>
    </citation>
    <scope>NUCLEOTIDE SEQUENCE [LARGE SCALE GENOMIC DNA]</scope>
    <source>
        <strain>SE11</strain>
    </source>
</reference>
<feature type="signal peptide" description="Tat-type signal" evidence="1">
    <location>
        <begin position="1"/>
        <end position="31"/>
    </location>
</feature>
<feature type="chain" id="PRO_1000186362" description="Periplasmic nitrate reductase" evidence="1">
    <location>
        <begin position="32"/>
        <end position="828"/>
    </location>
</feature>
<feature type="domain" description="4Fe-4S Mo/W bis-MGD-type" evidence="1">
    <location>
        <begin position="39"/>
        <end position="95"/>
    </location>
</feature>
<feature type="binding site" evidence="1">
    <location>
        <position position="46"/>
    </location>
    <ligand>
        <name>[4Fe-4S] cluster</name>
        <dbReference type="ChEBI" id="CHEBI:49883"/>
    </ligand>
</feature>
<feature type="binding site" evidence="1">
    <location>
        <position position="49"/>
    </location>
    <ligand>
        <name>[4Fe-4S] cluster</name>
        <dbReference type="ChEBI" id="CHEBI:49883"/>
    </ligand>
</feature>
<feature type="binding site" evidence="1">
    <location>
        <position position="53"/>
    </location>
    <ligand>
        <name>[4Fe-4S] cluster</name>
        <dbReference type="ChEBI" id="CHEBI:49883"/>
    </ligand>
</feature>
<feature type="binding site" evidence="1">
    <location>
        <position position="81"/>
    </location>
    <ligand>
        <name>[4Fe-4S] cluster</name>
        <dbReference type="ChEBI" id="CHEBI:49883"/>
    </ligand>
</feature>
<feature type="binding site" evidence="1">
    <location>
        <position position="83"/>
    </location>
    <ligand>
        <name>Mo-bis(molybdopterin guanine dinucleotide)</name>
        <dbReference type="ChEBI" id="CHEBI:60539"/>
    </ligand>
</feature>
<feature type="binding site" evidence="1">
    <location>
        <position position="150"/>
    </location>
    <ligand>
        <name>Mo-bis(molybdopterin guanine dinucleotide)</name>
        <dbReference type="ChEBI" id="CHEBI:60539"/>
    </ligand>
</feature>
<feature type="binding site" evidence="1">
    <location>
        <position position="175"/>
    </location>
    <ligand>
        <name>Mo-bis(molybdopterin guanine dinucleotide)</name>
        <dbReference type="ChEBI" id="CHEBI:60539"/>
    </ligand>
</feature>
<feature type="binding site" evidence="1">
    <location>
        <position position="179"/>
    </location>
    <ligand>
        <name>Mo-bis(molybdopterin guanine dinucleotide)</name>
        <dbReference type="ChEBI" id="CHEBI:60539"/>
    </ligand>
</feature>
<feature type="binding site" evidence="1">
    <location>
        <begin position="212"/>
        <end position="219"/>
    </location>
    <ligand>
        <name>Mo-bis(molybdopterin guanine dinucleotide)</name>
        <dbReference type="ChEBI" id="CHEBI:60539"/>
    </ligand>
</feature>
<feature type="binding site" evidence="1">
    <location>
        <begin position="243"/>
        <end position="247"/>
    </location>
    <ligand>
        <name>Mo-bis(molybdopterin guanine dinucleotide)</name>
        <dbReference type="ChEBI" id="CHEBI:60539"/>
    </ligand>
</feature>
<feature type="binding site" evidence="1">
    <location>
        <begin position="262"/>
        <end position="264"/>
    </location>
    <ligand>
        <name>Mo-bis(molybdopterin guanine dinucleotide)</name>
        <dbReference type="ChEBI" id="CHEBI:60539"/>
    </ligand>
</feature>
<feature type="binding site" evidence="1">
    <location>
        <position position="372"/>
    </location>
    <ligand>
        <name>Mo-bis(molybdopterin guanine dinucleotide)</name>
        <dbReference type="ChEBI" id="CHEBI:60539"/>
    </ligand>
</feature>
<feature type="binding site" evidence="1">
    <location>
        <position position="376"/>
    </location>
    <ligand>
        <name>Mo-bis(molybdopterin guanine dinucleotide)</name>
        <dbReference type="ChEBI" id="CHEBI:60539"/>
    </ligand>
</feature>
<feature type="binding site" evidence="1">
    <location>
        <position position="482"/>
    </location>
    <ligand>
        <name>Mo-bis(molybdopterin guanine dinucleotide)</name>
        <dbReference type="ChEBI" id="CHEBI:60539"/>
    </ligand>
</feature>
<feature type="binding site" evidence="1">
    <location>
        <begin position="508"/>
        <end position="509"/>
    </location>
    <ligand>
        <name>Mo-bis(molybdopterin guanine dinucleotide)</name>
        <dbReference type="ChEBI" id="CHEBI:60539"/>
    </ligand>
</feature>
<feature type="binding site" evidence="1">
    <location>
        <position position="531"/>
    </location>
    <ligand>
        <name>Mo-bis(molybdopterin guanine dinucleotide)</name>
        <dbReference type="ChEBI" id="CHEBI:60539"/>
    </ligand>
</feature>
<feature type="binding site" evidence="1">
    <location>
        <position position="558"/>
    </location>
    <ligand>
        <name>Mo-bis(molybdopterin guanine dinucleotide)</name>
        <dbReference type="ChEBI" id="CHEBI:60539"/>
    </ligand>
</feature>
<feature type="binding site" evidence="1">
    <location>
        <begin position="718"/>
        <end position="727"/>
    </location>
    <ligand>
        <name>Mo-bis(molybdopterin guanine dinucleotide)</name>
        <dbReference type="ChEBI" id="CHEBI:60539"/>
    </ligand>
</feature>
<feature type="binding site" evidence="1">
    <location>
        <position position="794"/>
    </location>
    <ligand>
        <name>substrate</name>
    </ligand>
</feature>
<feature type="binding site" evidence="1">
    <location>
        <position position="802"/>
    </location>
    <ligand>
        <name>Mo-bis(molybdopterin guanine dinucleotide)</name>
        <dbReference type="ChEBI" id="CHEBI:60539"/>
    </ligand>
</feature>
<feature type="binding site" evidence="1">
    <location>
        <position position="819"/>
    </location>
    <ligand>
        <name>Mo-bis(molybdopterin guanine dinucleotide)</name>
        <dbReference type="ChEBI" id="CHEBI:60539"/>
    </ligand>
</feature>
<keyword id="KW-0004">4Fe-4S</keyword>
<keyword id="KW-0249">Electron transport</keyword>
<keyword id="KW-0408">Iron</keyword>
<keyword id="KW-0411">Iron-sulfur</keyword>
<keyword id="KW-0479">Metal-binding</keyword>
<keyword id="KW-0500">Molybdenum</keyword>
<keyword id="KW-0534">Nitrate assimilation</keyword>
<keyword id="KW-0560">Oxidoreductase</keyword>
<keyword id="KW-0574">Periplasm</keyword>
<keyword id="KW-0732">Signal</keyword>
<keyword id="KW-0813">Transport</keyword>
<accession>B6I1A4</accession>
<comment type="function">
    <text evidence="1">Catalytic subunit of the periplasmic nitrate reductase complex NapAB. Receives electrons from NapB and catalyzes the reduction of nitrate to nitrite.</text>
</comment>
<comment type="catalytic activity">
    <reaction evidence="1">
        <text>2 Fe(II)-[cytochrome] + nitrate + 2 H(+) = 2 Fe(III)-[cytochrome] + nitrite + H2O</text>
        <dbReference type="Rhea" id="RHEA:12909"/>
        <dbReference type="Rhea" id="RHEA-COMP:11777"/>
        <dbReference type="Rhea" id="RHEA-COMP:11778"/>
        <dbReference type="ChEBI" id="CHEBI:15377"/>
        <dbReference type="ChEBI" id="CHEBI:15378"/>
        <dbReference type="ChEBI" id="CHEBI:16301"/>
        <dbReference type="ChEBI" id="CHEBI:17632"/>
        <dbReference type="ChEBI" id="CHEBI:29033"/>
        <dbReference type="ChEBI" id="CHEBI:29034"/>
        <dbReference type="EC" id="1.9.6.1"/>
    </reaction>
</comment>
<comment type="cofactor">
    <cofactor evidence="1">
        <name>[4Fe-4S] cluster</name>
        <dbReference type="ChEBI" id="CHEBI:49883"/>
    </cofactor>
    <text evidence="1">Binds 1 [4Fe-4S] cluster.</text>
</comment>
<comment type="cofactor">
    <cofactor evidence="1">
        <name>Mo-bis(molybdopterin guanine dinucleotide)</name>
        <dbReference type="ChEBI" id="CHEBI:60539"/>
    </cofactor>
    <text evidence="1">Binds 1 molybdenum-bis(molybdopterin guanine dinucleotide) (Mo-bis-MGD) cofactor per subunit.</text>
</comment>
<comment type="subunit">
    <text evidence="1">Component of the periplasmic nitrate reductase NapAB complex composed of NapA and NapB.</text>
</comment>
<comment type="subcellular location">
    <subcellularLocation>
        <location evidence="1">Periplasm</location>
    </subcellularLocation>
</comment>
<comment type="PTM">
    <text evidence="1">Predicted to be exported by the Tat system. The position of the signal peptide cleavage has not been experimentally proven.</text>
</comment>
<comment type="similarity">
    <text evidence="1">Belongs to the prokaryotic molybdopterin-containing oxidoreductase family. NasA/NapA/NarB subfamily.</text>
</comment>
<dbReference type="EC" id="1.9.6.1" evidence="1"/>
<dbReference type="EMBL" id="AP009240">
    <property type="protein sequence ID" value="BAG77998.1"/>
    <property type="molecule type" value="Genomic_DNA"/>
</dbReference>
<dbReference type="RefSeq" id="WP_000778067.1">
    <property type="nucleotide sequence ID" value="NC_011415.1"/>
</dbReference>
<dbReference type="SMR" id="B6I1A4"/>
<dbReference type="GeneID" id="93774972"/>
<dbReference type="KEGG" id="ecy:ECSE_2474"/>
<dbReference type="HOGENOM" id="CLU_000422_13_4_6"/>
<dbReference type="Proteomes" id="UP000008199">
    <property type="component" value="Chromosome"/>
</dbReference>
<dbReference type="GO" id="GO:0016020">
    <property type="term" value="C:membrane"/>
    <property type="evidence" value="ECO:0007669"/>
    <property type="project" value="TreeGrafter"/>
</dbReference>
<dbReference type="GO" id="GO:0009325">
    <property type="term" value="C:nitrate reductase complex"/>
    <property type="evidence" value="ECO:0007669"/>
    <property type="project" value="TreeGrafter"/>
</dbReference>
<dbReference type="GO" id="GO:0042597">
    <property type="term" value="C:periplasmic space"/>
    <property type="evidence" value="ECO:0007669"/>
    <property type="project" value="UniProtKB-SubCell"/>
</dbReference>
<dbReference type="GO" id="GO:0051539">
    <property type="term" value="F:4 iron, 4 sulfur cluster binding"/>
    <property type="evidence" value="ECO:0007669"/>
    <property type="project" value="UniProtKB-KW"/>
</dbReference>
<dbReference type="GO" id="GO:0009055">
    <property type="term" value="F:electron transfer activity"/>
    <property type="evidence" value="ECO:0007669"/>
    <property type="project" value="UniProtKB-UniRule"/>
</dbReference>
<dbReference type="GO" id="GO:0005506">
    <property type="term" value="F:iron ion binding"/>
    <property type="evidence" value="ECO:0007669"/>
    <property type="project" value="UniProtKB-UniRule"/>
</dbReference>
<dbReference type="GO" id="GO:0030151">
    <property type="term" value="F:molybdenum ion binding"/>
    <property type="evidence" value="ECO:0007669"/>
    <property type="project" value="InterPro"/>
</dbReference>
<dbReference type="GO" id="GO:0043546">
    <property type="term" value="F:molybdopterin cofactor binding"/>
    <property type="evidence" value="ECO:0007669"/>
    <property type="project" value="InterPro"/>
</dbReference>
<dbReference type="GO" id="GO:0050140">
    <property type="term" value="F:nitrate reductase (cytochrome) activity"/>
    <property type="evidence" value="ECO:0007669"/>
    <property type="project" value="UniProtKB-EC"/>
</dbReference>
<dbReference type="GO" id="GO:0045333">
    <property type="term" value="P:cellular respiration"/>
    <property type="evidence" value="ECO:0007669"/>
    <property type="project" value="UniProtKB-ARBA"/>
</dbReference>
<dbReference type="GO" id="GO:0006777">
    <property type="term" value="P:Mo-molybdopterin cofactor biosynthetic process"/>
    <property type="evidence" value="ECO:0007669"/>
    <property type="project" value="UniProtKB-UniRule"/>
</dbReference>
<dbReference type="GO" id="GO:0042128">
    <property type="term" value="P:nitrate assimilation"/>
    <property type="evidence" value="ECO:0007669"/>
    <property type="project" value="UniProtKB-UniRule"/>
</dbReference>
<dbReference type="CDD" id="cd02791">
    <property type="entry name" value="MopB_CT_Nitrate-R-NapA-like"/>
    <property type="match status" value="1"/>
</dbReference>
<dbReference type="CDD" id="cd02754">
    <property type="entry name" value="MopB_Nitrate-R-NapA-like"/>
    <property type="match status" value="1"/>
</dbReference>
<dbReference type="FunFam" id="2.40.40.20:FF:000005">
    <property type="entry name" value="Periplasmic nitrate reductase"/>
    <property type="match status" value="1"/>
</dbReference>
<dbReference type="FunFam" id="3.40.228.10:FF:000001">
    <property type="entry name" value="Periplasmic nitrate reductase"/>
    <property type="match status" value="1"/>
</dbReference>
<dbReference type="Gene3D" id="2.40.40.20">
    <property type="match status" value="1"/>
</dbReference>
<dbReference type="Gene3D" id="3.30.200.210">
    <property type="match status" value="1"/>
</dbReference>
<dbReference type="Gene3D" id="3.40.50.740">
    <property type="match status" value="1"/>
</dbReference>
<dbReference type="Gene3D" id="3.40.228.10">
    <property type="entry name" value="Dimethylsulfoxide Reductase, domain 2"/>
    <property type="match status" value="1"/>
</dbReference>
<dbReference type="HAMAP" id="MF_01630">
    <property type="entry name" value="Nitrate_reduct_NapA"/>
    <property type="match status" value="1"/>
</dbReference>
<dbReference type="InterPro" id="IPR009010">
    <property type="entry name" value="Asp_de-COase-like_dom_sf"/>
</dbReference>
<dbReference type="InterPro" id="IPR041957">
    <property type="entry name" value="CT_Nitrate-R-NapA-like"/>
</dbReference>
<dbReference type="InterPro" id="IPR006657">
    <property type="entry name" value="MoPterin_dinucl-bd_dom"/>
</dbReference>
<dbReference type="InterPro" id="IPR006656">
    <property type="entry name" value="Mopterin_OxRdtase"/>
</dbReference>
<dbReference type="InterPro" id="IPR006963">
    <property type="entry name" value="Mopterin_OxRdtase_4Fe-4S_dom"/>
</dbReference>
<dbReference type="InterPro" id="IPR027467">
    <property type="entry name" value="MopterinOxRdtase_cofactor_BS"/>
</dbReference>
<dbReference type="InterPro" id="IPR010051">
    <property type="entry name" value="Periplasm_NO3_reductase_lsu"/>
</dbReference>
<dbReference type="InterPro" id="IPR050123">
    <property type="entry name" value="Prok_molybdopt-oxidoreductase"/>
</dbReference>
<dbReference type="InterPro" id="IPR006311">
    <property type="entry name" value="TAT_signal"/>
</dbReference>
<dbReference type="InterPro" id="IPR019546">
    <property type="entry name" value="TAT_signal_bac_arc"/>
</dbReference>
<dbReference type="NCBIfam" id="TIGR01706">
    <property type="entry name" value="NAPA"/>
    <property type="match status" value="1"/>
</dbReference>
<dbReference type="NCBIfam" id="NF010055">
    <property type="entry name" value="PRK13532.1"/>
    <property type="match status" value="1"/>
</dbReference>
<dbReference type="NCBIfam" id="TIGR01409">
    <property type="entry name" value="TAT_signal_seq"/>
    <property type="match status" value="1"/>
</dbReference>
<dbReference type="PANTHER" id="PTHR43105:SF11">
    <property type="entry name" value="PERIPLASMIC NITRATE REDUCTASE"/>
    <property type="match status" value="1"/>
</dbReference>
<dbReference type="PANTHER" id="PTHR43105">
    <property type="entry name" value="RESPIRATORY NITRATE REDUCTASE"/>
    <property type="match status" value="1"/>
</dbReference>
<dbReference type="Pfam" id="PF04879">
    <property type="entry name" value="Molybdop_Fe4S4"/>
    <property type="match status" value="1"/>
</dbReference>
<dbReference type="Pfam" id="PF00384">
    <property type="entry name" value="Molybdopterin"/>
    <property type="match status" value="1"/>
</dbReference>
<dbReference type="Pfam" id="PF01568">
    <property type="entry name" value="Molydop_binding"/>
    <property type="match status" value="1"/>
</dbReference>
<dbReference type="SMART" id="SM00926">
    <property type="entry name" value="Molybdop_Fe4S4"/>
    <property type="match status" value="1"/>
</dbReference>
<dbReference type="SUPFAM" id="SSF50692">
    <property type="entry name" value="ADC-like"/>
    <property type="match status" value="1"/>
</dbReference>
<dbReference type="SUPFAM" id="SSF53706">
    <property type="entry name" value="Formate dehydrogenase/DMSO reductase, domains 1-3"/>
    <property type="match status" value="1"/>
</dbReference>
<dbReference type="PROSITE" id="PS51669">
    <property type="entry name" value="4FE4S_MOW_BIS_MGD"/>
    <property type="match status" value="1"/>
</dbReference>
<dbReference type="PROSITE" id="PS00551">
    <property type="entry name" value="MOLYBDOPTERIN_PROK_1"/>
    <property type="match status" value="1"/>
</dbReference>
<dbReference type="PROSITE" id="PS51318">
    <property type="entry name" value="TAT"/>
    <property type="match status" value="1"/>
</dbReference>
<evidence type="ECO:0000255" key="1">
    <source>
        <dbReference type="HAMAP-Rule" id="MF_01630"/>
    </source>
</evidence>
<protein>
    <recommendedName>
        <fullName evidence="1">Periplasmic nitrate reductase</fullName>
        <ecNumber evidence="1">1.9.6.1</ecNumber>
    </recommendedName>
</protein>
<proteinExistence type="inferred from homology"/>
<sequence>MKLSRRSFMKANAVAAAAAAAGLSVPGVARAVVGQQEAIKWDKAPCRFCGTGCGVLVGTQQGRVVACQGDPDAPVNRGLNCIKGYFLPKIMYGKDRLTQPLLRMKNGKYDKEGEFTPITWDQAFDVMEEKFKTALKEKGPESIGMFGSGQWTIWEGYAASKLFKAGFRSNNIDPNARHCMASAVVGFMRTFGMDEPMGCYDDIEQADAFVLWGANMAEMHPILWSRITNRRLSNQNVTVAVLSTYQHRSFELADNGIIFTPQSDLVILNYIANYIIQNNAINQDFFSKHVNLRKGATDIGYGLRPTHPLEKAAKNPGSDASEPMSFEDYKAFVAEYTLEKTAEMTGVPKDQLEQLAQLYADPNKKVISYWTMGFNQHTRGVWANNLVYNLHLLTGKISQPGCGPFSLTGQPSACGTAREVGTFAHRLPADMVVTNEKHRDICEKKWNIPSGTIPAKIGLHAVAQDRALKDGKLNVYWTMCTNNMQAGPNINEERMPGWRDPRNFIIVSDPYPTVSALAADLILPTAMWVEKEGAYGNAERRTQFWRQQVQAPGEAKSDLWQLVQFSRRFKTEEVWPEELLAKKPELRGKTLYEVLYATPEVSKFPVSELAEDQLNDESRELGFYLQKGLFEEYAWFGRGHGHDLAPFDDYHKARGLRWPVVNGKETQWRYSEGNDPYVKAGEGYKFYGKPDGKAVIFALPFEPAAEAPDEEYDLWLSTGRVLEHWHTGSMTRRVPELHRAFPEAVLFIHPLDAKARDLRRGDKVKVVSRRGEVISIVETRGRNRPPQGLVYMPFFDAAQLVNKLTLDATDPLSKETDFKKCAVKLEKV</sequence>
<name>NAPA_ECOSE</name>
<gene>
    <name evidence="1" type="primary">napA</name>
    <name type="ordered locus">ECSE_2474</name>
</gene>
<organism>
    <name type="scientific">Escherichia coli (strain SE11)</name>
    <dbReference type="NCBI Taxonomy" id="409438"/>
    <lineage>
        <taxon>Bacteria</taxon>
        <taxon>Pseudomonadati</taxon>
        <taxon>Pseudomonadota</taxon>
        <taxon>Gammaproteobacteria</taxon>
        <taxon>Enterobacterales</taxon>
        <taxon>Enterobacteriaceae</taxon>
        <taxon>Escherichia</taxon>
    </lineage>
</organism>